<gene>
    <name evidence="1" type="primary">araB</name>
    <name type="ordered locus">SDY_0090</name>
</gene>
<name>ARAB_SHIDS</name>
<keyword id="KW-0054">Arabinose catabolism</keyword>
<keyword id="KW-0067">ATP-binding</keyword>
<keyword id="KW-0119">Carbohydrate metabolism</keyword>
<keyword id="KW-0418">Kinase</keyword>
<keyword id="KW-0547">Nucleotide-binding</keyword>
<keyword id="KW-1185">Reference proteome</keyword>
<keyword id="KW-0808">Transferase</keyword>
<comment type="catalytic activity">
    <reaction evidence="1">
        <text>D-ribulose + ATP = D-ribulose 5-phosphate + ADP + H(+)</text>
        <dbReference type="Rhea" id="RHEA:17601"/>
        <dbReference type="ChEBI" id="CHEBI:15378"/>
        <dbReference type="ChEBI" id="CHEBI:17173"/>
        <dbReference type="ChEBI" id="CHEBI:30616"/>
        <dbReference type="ChEBI" id="CHEBI:58121"/>
        <dbReference type="ChEBI" id="CHEBI:456216"/>
        <dbReference type="EC" id="2.7.1.16"/>
    </reaction>
</comment>
<comment type="catalytic activity">
    <reaction evidence="1">
        <text>L-ribulose + ATP = L-ribulose 5-phosphate + ADP + H(+)</text>
        <dbReference type="Rhea" id="RHEA:22072"/>
        <dbReference type="ChEBI" id="CHEBI:15378"/>
        <dbReference type="ChEBI" id="CHEBI:16880"/>
        <dbReference type="ChEBI" id="CHEBI:30616"/>
        <dbReference type="ChEBI" id="CHEBI:58226"/>
        <dbReference type="ChEBI" id="CHEBI:456216"/>
        <dbReference type="EC" id="2.7.1.16"/>
    </reaction>
</comment>
<comment type="pathway">
    <text evidence="1">Carbohydrate degradation; L-arabinose degradation via L-ribulose; D-xylulose 5-phosphate from L-arabinose (bacterial route): step 2/3.</text>
</comment>
<comment type="similarity">
    <text evidence="1">Belongs to the ribulokinase family.</text>
</comment>
<feature type="chain" id="PRO_0000263405" description="Ribulokinase">
    <location>
        <begin position="1"/>
        <end position="566"/>
    </location>
</feature>
<evidence type="ECO:0000255" key="1">
    <source>
        <dbReference type="HAMAP-Rule" id="MF_00520"/>
    </source>
</evidence>
<reference key="1">
    <citation type="journal article" date="2005" name="Nucleic Acids Res.">
        <title>Genome dynamics and diversity of Shigella species, the etiologic agents of bacillary dysentery.</title>
        <authorList>
            <person name="Yang F."/>
            <person name="Yang J."/>
            <person name="Zhang X."/>
            <person name="Chen L."/>
            <person name="Jiang Y."/>
            <person name="Yan Y."/>
            <person name="Tang X."/>
            <person name="Wang J."/>
            <person name="Xiong Z."/>
            <person name="Dong J."/>
            <person name="Xue Y."/>
            <person name="Zhu Y."/>
            <person name="Xu X."/>
            <person name="Sun L."/>
            <person name="Chen S."/>
            <person name="Nie H."/>
            <person name="Peng J."/>
            <person name="Xu J."/>
            <person name="Wang Y."/>
            <person name="Yuan Z."/>
            <person name="Wen Y."/>
            <person name="Yao Z."/>
            <person name="Shen Y."/>
            <person name="Qiang B."/>
            <person name="Hou Y."/>
            <person name="Yu J."/>
            <person name="Jin Q."/>
        </authorList>
    </citation>
    <scope>NUCLEOTIDE SEQUENCE [LARGE SCALE GENOMIC DNA]</scope>
    <source>
        <strain>Sd197</strain>
    </source>
</reference>
<proteinExistence type="inferred from homology"/>
<sequence length="566" mass="61381">MAIAIGLDFGSDSVRALAVDCTTGEEIATSVEWYPRWQKGQFCDAPNNQFRHHPRDYIESMEAALKTVLAELSVEQRAAVVRIGVDSTGSTPAPIDADGNVLALRPEFAENPNAMFVLWKDHTAVEEAEEITRLCHALGNVDYSRYIGGIYSSEWFWAKILHVTRQDSAVAQSAASWIELCDWVPALLSGTTRPQDIRRGRCSAGHKSLWHESWGGLPPASFFDELDPILNRHLPSPLFTDTWTADIPVGTLCPEWAQRLGLPESVVISGGAFDCHMGAVGAGAQPNALVKVISTSTCDILIADKQSVGERAVKGICGQVDGSVVPGFIGLEAGQSAFGDIYAWFGRVLGWPLEQLAAHHPELKEQINASQKQLLPALTEAWAKNPSLDHLPVVLDWFNGRRTPNANQRLKGVITDLNLATDAPLLFGGLIAATAFGARAIMECFTDQGIAVNNVMALGGIARKNQVIMQACCDVLNRPLQIVASDQCCALGAAIFAAVAAKVHADIPSAQQKMASAVEKTLQPRSEQAQRFEQLYRRYQQWAMSAEQHYLPTSAPAQAAQAVPTL</sequence>
<organism>
    <name type="scientific">Shigella dysenteriae serotype 1 (strain Sd197)</name>
    <dbReference type="NCBI Taxonomy" id="300267"/>
    <lineage>
        <taxon>Bacteria</taxon>
        <taxon>Pseudomonadati</taxon>
        <taxon>Pseudomonadota</taxon>
        <taxon>Gammaproteobacteria</taxon>
        <taxon>Enterobacterales</taxon>
        <taxon>Enterobacteriaceae</taxon>
        <taxon>Shigella</taxon>
    </lineage>
</organism>
<accession>Q32K30</accession>
<protein>
    <recommendedName>
        <fullName evidence="1">Ribulokinase</fullName>
        <ecNumber evidence="1">2.7.1.16</ecNumber>
    </recommendedName>
</protein>
<dbReference type="EC" id="2.7.1.16" evidence="1"/>
<dbReference type="EMBL" id="CP000034">
    <property type="protein sequence ID" value="ABB60327.1"/>
    <property type="molecule type" value="Genomic_DNA"/>
</dbReference>
<dbReference type="RefSeq" id="WP_000951876.1">
    <property type="nucleotide sequence ID" value="NC_007606.1"/>
</dbReference>
<dbReference type="RefSeq" id="YP_401816.1">
    <property type="nucleotide sequence ID" value="NC_007606.1"/>
</dbReference>
<dbReference type="SMR" id="Q32K30"/>
<dbReference type="STRING" id="300267.SDY_0090"/>
<dbReference type="EnsemblBacteria" id="ABB60327">
    <property type="protein sequence ID" value="ABB60327"/>
    <property type="gene ID" value="SDY_0090"/>
</dbReference>
<dbReference type="KEGG" id="sdy:SDY_0090"/>
<dbReference type="PATRIC" id="fig|300267.13.peg.105"/>
<dbReference type="HOGENOM" id="CLU_009281_9_1_6"/>
<dbReference type="UniPathway" id="UPA00145">
    <property type="reaction ID" value="UER00566"/>
</dbReference>
<dbReference type="Proteomes" id="UP000002716">
    <property type="component" value="Chromosome"/>
</dbReference>
<dbReference type="GO" id="GO:0005737">
    <property type="term" value="C:cytoplasm"/>
    <property type="evidence" value="ECO:0007669"/>
    <property type="project" value="TreeGrafter"/>
</dbReference>
<dbReference type="GO" id="GO:0005524">
    <property type="term" value="F:ATP binding"/>
    <property type="evidence" value="ECO:0007669"/>
    <property type="project" value="UniProtKB-KW"/>
</dbReference>
<dbReference type="GO" id="GO:0019150">
    <property type="term" value="F:D-ribulokinase activity"/>
    <property type="evidence" value="ECO:0007669"/>
    <property type="project" value="RHEA"/>
</dbReference>
<dbReference type="GO" id="GO:0008741">
    <property type="term" value="F:ribulokinase activity"/>
    <property type="evidence" value="ECO:0007669"/>
    <property type="project" value="UniProtKB-UniRule"/>
</dbReference>
<dbReference type="GO" id="GO:0019569">
    <property type="term" value="P:L-arabinose catabolic process to xylulose 5-phosphate"/>
    <property type="evidence" value="ECO:0007669"/>
    <property type="project" value="UniProtKB-UniRule"/>
</dbReference>
<dbReference type="CDD" id="cd07781">
    <property type="entry name" value="ASKHA_NBD_FGGY_L-RBK"/>
    <property type="match status" value="1"/>
</dbReference>
<dbReference type="Gene3D" id="1.20.58.2240">
    <property type="match status" value="1"/>
</dbReference>
<dbReference type="Gene3D" id="3.30.420.40">
    <property type="match status" value="1"/>
</dbReference>
<dbReference type="HAMAP" id="MF_00520">
    <property type="entry name" value="Ribulokinase"/>
    <property type="match status" value="1"/>
</dbReference>
<dbReference type="InterPro" id="IPR043129">
    <property type="entry name" value="ATPase_NBD"/>
</dbReference>
<dbReference type="InterPro" id="IPR018485">
    <property type="entry name" value="FGGY_C"/>
</dbReference>
<dbReference type="InterPro" id="IPR005929">
    <property type="entry name" value="Ribulokinase"/>
</dbReference>
<dbReference type="NCBIfam" id="TIGR01234">
    <property type="entry name" value="L-ribulokinase"/>
    <property type="match status" value="1"/>
</dbReference>
<dbReference type="NCBIfam" id="NF003154">
    <property type="entry name" value="PRK04123.1"/>
    <property type="match status" value="1"/>
</dbReference>
<dbReference type="PANTHER" id="PTHR43435:SF4">
    <property type="entry name" value="FGGY CARBOHYDRATE KINASE DOMAIN-CONTAINING PROTEIN"/>
    <property type="match status" value="1"/>
</dbReference>
<dbReference type="PANTHER" id="PTHR43435">
    <property type="entry name" value="RIBULOKINASE"/>
    <property type="match status" value="1"/>
</dbReference>
<dbReference type="Pfam" id="PF02782">
    <property type="entry name" value="FGGY_C"/>
    <property type="match status" value="1"/>
</dbReference>
<dbReference type="SUPFAM" id="SSF53067">
    <property type="entry name" value="Actin-like ATPase domain"/>
    <property type="match status" value="2"/>
</dbReference>